<accession>Q06424</accession>
<feature type="chain" id="PRO_0000187548" description="Uncharacterized 8.2 kDa protein in gpA 5'region">
    <location>
        <begin position="1"/>
        <end position="74"/>
    </location>
</feature>
<feature type="zinc finger region" description="dksA C4-type" evidence="1">
    <location>
        <begin position="35"/>
        <end position="59"/>
    </location>
</feature>
<gene>
    <name type="primary">ORF82</name>
</gene>
<dbReference type="EMBL" id="AF063097">
    <property type="protein sequence ID" value="AAD03304.1"/>
    <property type="molecule type" value="Genomic_DNA"/>
</dbReference>
<dbReference type="PIR" id="S33833">
    <property type="entry name" value="S33833"/>
</dbReference>
<dbReference type="RefSeq" id="NP_046793.1">
    <property type="nucleotide sequence ID" value="NC_001895.1"/>
</dbReference>
<dbReference type="SMR" id="Q06424"/>
<dbReference type="KEGG" id="vg:77440827"/>
<dbReference type="Proteomes" id="UP000009092">
    <property type="component" value="Genome"/>
</dbReference>
<dbReference type="GO" id="GO:0008270">
    <property type="term" value="F:zinc ion binding"/>
    <property type="evidence" value="ECO:0007669"/>
    <property type="project" value="UniProtKB-KW"/>
</dbReference>
<dbReference type="GO" id="GO:1900378">
    <property type="term" value="P:positive regulation of secondary metabolite biosynthetic process"/>
    <property type="evidence" value="ECO:0007669"/>
    <property type="project" value="TreeGrafter"/>
</dbReference>
<dbReference type="Gene3D" id="1.20.120.910">
    <property type="entry name" value="DksA, coiled-coil domain"/>
    <property type="match status" value="1"/>
</dbReference>
<dbReference type="InterPro" id="IPR020460">
    <property type="entry name" value="Znf_C4-type_bac"/>
</dbReference>
<dbReference type="InterPro" id="IPR012783">
    <property type="entry name" value="Znf_C4_TraR"/>
</dbReference>
<dbReference type="InterPro" id="IPR000962">
    <property type="entry name" value="Znf_DskA_TraR"/>
</dbReference>
<dbReference type="InterPro" id="IPR020458">
    <property type="entry name" value="Znf_DskA_TraR_CS"/>
</dbReference>
<dbReference type="NCBIfam" id="TIGR02419">
    <property type="entry name" value="C4_traR_proteo"/>
    <property type="match status" value="1"/>
</dbReference>
<dbReference type="PANTHER" id="PTHR38777:SF1">
    <property type="entry name" value="DNAK SUPPRESSOR PROTEIN"/>
    <property type="match status" value="1"/>
</dbReference>
<dbReference type="PANTHER" id="PTHR38777">
    <property type="entry name" value="FELS-2 PROPHAGE PROTEIN"/>
    <property type="match status" value="1"/>
</dbReference>
<dbReference type="Pfam" id="PF01258">
    <property type="entry name" value="zf-dskA_traR"/>
    <property type="match status" value="1"/>
</dbReference>
<dbReference type="PRINTS" id="PR00618">
    <property type="entry name" value="DKSAZNFINGER"/>
</dbReference>
<dbReference type="SUPFAM" id="SSF57716">
    <property type="entry name" value="Glucocorticoid receptor-like (DNA-binding domain)"/>
    <property type="match status" value="1"/>
</dbReference>
<dbReference type="PROSITE" id="PS01102">
    <property type="entry name" value="ZF_DKSA_1"/>
    <property type="match status" value="1"/>
</dbReference>
<dbReference type="PROSITE" id="PS51128">
    <property type="entry name" value="ZF_DKSA_2"/>
    <property type="match status" value="1"/>
</dbReference>
<name>YO82_BPP2</name>
<evidence type="ECO:0000255" key="1">
    <source>
        <dbReference type="PROSITE-ProRule" id="PRU00510"/>
    </source>
</evidence>
<reference key="1">
    <citation type="journal article" date="1993" name="J. Mol. Biol.">
        <title>Studies of bacteriophage P2 DNA replication. The DNA sequence of the cis-acting gene A and ori region and construction of a P2 mini-chromosome.</title>
        <authorList>
            <person name="Liu Y."/>
            <person name="Saha S."/>
            <person name="Haggaard-Ljungquist E."/>
        </authorList>
    </citation>
    <scope>NUCLEOTIDE SEQUENCE [GENOMIC DNA]</scope>
</reference>
<protein>
    <recommendedName>
        <fullName>Uncharacterized 8.2 kDa protein in gpA 5'region</fullName>
    </recommendedName>
    <alternativeName>
        <fullName>ORF3</fullName>
    </alternativeName>
</protein>
<organismHost>
    <name type="scientific">Enterobacteriaceae</name>
    <dbReference type="NCBI Taxonomy" id="543"/>
</organismHost>
<sequence>MPDNVDFIQEQQAELLERQINAARVKHCGASALVCEECDAPIPAARRAAYPSATRCVSCQSVFEAKNKHYRRTA</sequence>
<proteinExistence type="predicted"/>
<organism>
    <name type="scientific">Escherichia phage P2</name>
    <name type="common">Bacteriophage P2</name>
    <dbReference type="NCBI Taxonomy" id="2905681"/>
    <lineage>
        <taxon>Viruses</taxon>
        <taxon>Duplodnaviria</taxon>
        <taxon>Heunggongvirae</taxon>
        <taxon>Uroviricota</taxon>
        <taxon>Caudoviricetes</taxon>
        <taxon>Peduoviridae</taxon>
        <taxon>Peduovirus</taxon>
        <taxon>Peduovirus P2</taxon>
    </lineage>
</organism>
<keyword id="KW-0479">Metal-binding</keyword>
<keyword id="KW-1185">Reference proteome</keyword>
<keyword id="KW-0862">Zinc</keyword>
<keyword id="KW-0863">Zinc-finger</keyword>